<proteinExistence type="inferred from homology"/>
<sequence>MQEKISKFEDFLTQLQQNITTALEQHETNAAKFISDKWQKPDTPDQKLKGYGNSMIIEGGEIFEKGVVAFSRVHGSELPPSATAKRQELAGKSFIATGLSLVIHPRNPFVPTSHANFRIFIAGADTDNPIWWFGGGFDLTPYYPFEEDAIHWHQTAKNICDKHDKTYYPKFKKWCDEYFYLKHRDEYRGVGGLFFDDLNDKSFDECFNFVTDCANSYLDAYIPIVAQRKNIEYSQKHKDFQLYRRGRYVEFNLVFDRGTIFGLQSGGRTESILSSMPPMATWKYNWQPEPGSEEEKVYQYIKPRDWIK</sequence>
<gene>
    <name evidence="1" type="primary">hemF</name>
    <name type="ordered locus">FTL_1022</name>
</gene>
<dbReference type="EC" id="1.3.3.3" evidence="1"/>
<dbReference type="EMBL" id="AM233362">
    <property type="protein sequence ID" value="CAJ79461.1"/>
    <property type="molecule type" value="Genomic_DNA"/>
</dbReference>
<dbReference type="RefSeq" id="WP_003015894.1">
    <property type="nucleotide sequence ID" value="NZ_CP009694.1"/>
</dbReference>
<dbReference type="SMR" id="Q2A3H9"/>
<dbReference type="KEGG" id="ftl:FTL_1022"/>
<dbReference type="UniPathway" id="UPA00251">
    <property type="reaction ID" value="UER00322"/>
</dbReference>
<dbReference type="Proteomes" id="UP000001944">
    <property type="component" value="Chromosome"/>
</dbReference>
<dbReference type="GO" id="GO:0005737">
    <property type="term" value="C:cytoplasm"/>
    <property type="evidence" value="ECO:0007669"/>
    <property type="project" value="UniProtKB-SubCell"/>
</dbReference>
<dbReference type="GO" id="GO:0004109">
    <property type="term" value="F:coproporphyrinogen oxidase activity"/>
    <property type="evidence" value="ECO:0007669"/>
    <property type="project" value="UniProtKB-UniRule"/>
</dbReference>
<dbReference type="GO" id="GO:0046872">
    <property type="term" value="F:metal ion binding"/>
    <property type="evidence" value="ECO:0007669"/>
    <property type="project" value="UniProtKB-KW"/>
</dbReference>
<dbReference type="GO" id="GO:0042803">
    <property type="term" value="F:protein homodimerization activity"/>
    <property type="evidence" value="ECO:0000250"/>
    <property type="project" value="UniProtKB"/>
</dbReference>
<dbReference type="GO" id="GO:0006782">
    <property type="term" value="P:protoporphyrinogen IX biosynthetic process"/>
    <property type="evidence" value="ECO:0007669"/>
    <property type="project" value="UniProtKB-UniRule"/>
</dbReference>
<dbReference type="FunFam" id="3.40.1500.10:FF:000010">
    <property type="entry name" value="Oxygen-dependent coproporphyrinogen-III oxidase"/>
    <property type="match status" value="1"/>
</dbReference>
<dbReference type="Gene3D" id="3.40.1500.10">
    <property type="entry name" value="Coproporphyrinogen III oxidase, aerobic"/>
    <property type="match status" value="1"/>
</dbReference>
<dbReference type="HAMAP" id="MF_00333">
    <property type="entry name" value="Coprogen_oxidas"/>
    <property type="match status" value="1"/>
</dbReference>
<dbReference type="InterPro" id="IPR001260">
    <property type="entry name" value="Coprogen_oxidase_aer"/>
</dbReference>
<dbReference type="InterPro" id="IPR036406">
    <property type="entry name" value="Coprogen_oxidase_aer_sf"/>
</dbReference>
<dbReference type="InterPro" id="IPR018375">
    <property type="entry name" value="Coprogen_oxidase_CS"/>
</dbReference>
<dbReference type="NCBIfam" id="NF003727">
    <property type="entry name" value="PRK05330.1"/>
    <property type="match status" value="1"/>
</dbReference>
<dbReference type="PANTHER" id="PTHR10755">
    <property type="entry name" value="COPROPORPHYRINOGEN III OXIDASE, MITOCHONDRIAL"/>
    <property type="match status" value="1"/>
</dbReference>
<dbReference type="PANTHER" id="PTHR10755:SF0">
    <property type="entry name" value="OXYGEN-DEPENDENT COPROPORPHYRINOGEN-III OXIDASE, MITOCHONDRIAL"/>
    <property type="match status" value="1"/>
</dbReference>
<dbReference type="Pfam" id="PF01218">
    <property type="entry name" value="Coprogen_oxidas"/>
    <property type="match status" value="1"/>
</dbReference>
<dbReference type="PIRSF" id="PIRSF000166">
    <property type="entry name" value="Coproporphyri_ox"/>
    <property type="match status" value="1"/>
</dbReference>
<dbReference type="PRINTS" id="PR00073">
    <property type="entry name" value="COPRGNOXDASE"/>
</dbReference>
<dbReference type="SUPFAM" id="SSF102886">
    <property type="entry name" value="Coproporphyrinogen III oxidase"/>
    <property type="match status" value="1"/>
</dbReference>
<dbReference type="PROSITE" id="PS01021">
    <property type="entry name" value="COPROGEN_OXIDASE"/>
    <property type="match status" value="1"/>
</dbReference>
<reference key="1">
    <citation type="submission" date="2006-03" db="EMBL/GenBank/DDBJ databases">
        <title>Complete genome sequence of Francisella tularensis LVS (Live Vaccine Strain).</title>
        <authorList>
            <person name="Chain P."/>
            <person name="Larimer F."/>
            <person name="Land M."/>
            <person name="Stilwagen S."/>
            <person name="Larsson P."/>
            <person name="Bearden S."/>
            <person name="Chu M."/>
            <person name="Oyston P."/>
            <person name="Forsman M."/>
            <person name="Andersson S."/>
            <person name="Lindler L."/>
            <person name="Titball R."/>
            <person name="Garcia E."/>
        </authorList>
    </citation>
    <scope>NUCLEOTIDE SEQUENCE [LARGE SCALE GENOMIC DNA]</scope>
    <source>
        <strain>LVS</strain>
    </source>
</reference>
<accession>Q2A3H9</accession>
<evidence type="ECO:0000255" key="1">
    <source>
        <dbReference type="HAMAP-Rule" id="MF_00333"/>
    </source>
</evidence>
<keyword id="KW-0963">Cytoplasm</keyword>
<keyword id="KW-0350">Heme biosynthesis</keyword>
<keyword id="KW-0479">Metal-binding</keyword>
<keyword id="KW-0560">Oxidoreductase</keyword>
<keyword id="KW-0627">Porphyrin biosynthesis</keyword>
<keyword id="KW-1185">Reference proteome</keyword>
<name>HEM6_FRATH</name>
<protein>
    <recommendedName>
        <fullName evidence="1">Oxygen-dependent coproporphyrinogen-III oxidase</fullName>
        <shortName evidence="1">CPO</shortName>
        <shortName evidence="1">Coprogen oxidase</shortName>
        <shortName evidence="1">Coproporphyrinogenase</shortName>
        <ecNumber evidence="1">1.3.3.3</ecNumber>
    </recommendedName>
</protein>
<feature type="chain" id="PRO_1000133183" description="Oxygen-dependent coproporphyrinogen-III oxidase">
    <location>
        <begin position="1"/>
        <end position="308"/>
    </location>
</feature>
<feature type="region of interest" description="Important for dimerization" evidence="1">
    <location>
        <begin position="248"/>
        <end position="283"/>
    </location>
</feature>
<feature type="active site" description="Proton donor" evidence="1">
    <location>
        <position position="114"/>
    </location>
</feature>
<feature type="binding site" evidence="1">
    <location>
        <position position="100"/>
    </location>
    <ligand>
        <name>substrate</name>
    </ligand>
</feature>
<feature type="binding site" evidence="1">
    <location>
        <position position="104"/>
    </location>
    <ligand>
        <name>a divalent metal cation</name>
        <dbReference type="ChEBI" id="CHEBI:60240"/>
    </ligand>
</feature>
<feature type="binding site" evidence="1">
    <location>
        <position position="114"/>
    </location>
    <ligand>
        <name>a divalent metal cation</name>
        <dbReference type="ChEBI" id="CHEBI:60240"/>
    </ligand>
</feature>
<feature type="binding site" evidence="1">
    <location>
        <begin position="116"/>
        <end position="118"/>
    </location>
    <ligand>
        <name>substrate</name>
    </ligand>
</feature>
<feature type="binding site" evidence="1">
    <location>
        <position position="153"/>
    </location>
    <ligand>
        <name>a divalent metal cation</name>
        <dbReference type="ChEBI" id="CHEBI:60240"/>
    </ligand>
</feature>
<feature type="binding site" evidence="1">
    <location>
        <position position="183"/>
    </location>
    <ligand>
        <name>a divalent metal cation</name>
        <dbReference type="ChEBI" id="CHEBI:60240"/>
    </ligand>
</feature>
<feature type="binding site" evidence="1">
    <location>
        <begin position="266"/>
        <end position="268"/>
    </location>
    <ligand>
        <name>substrate</name>
    </ligand>
</feature>
<feature type="site" description="Important for dimerization" evidence="1">
    <location>
        <position position="183"/>
    </location>
</feature>
<organism>
    <name type="scientific">Francisella tularensis subsp. holarctica (strain LVS)</name>
    <dbReference type="NCBI Taxonomy" id="376619"/>
    <lineage>
        <taxon>Bacteria</taxon>
        <taxon>Pseudomonadati</taxon>
        <taxon>Pseudomonadota</taxon>
        <taxon>Gammaproteobacteria</taxon>
        <taxon>Thiotrichales</taxon>
        <taxon>Francisellaceae</taxon>
        <taxon>Francisella</taxon>
    </lineage>
</organism>
<comment type="function">
    <text evidence="1">Involved in the heme biosynthesis. Catalyzes the aerobic oxidative decarboxylation of propionate groups of rings A and B of coproporphyrinogen-III to yield the vinyl groups in protoporphyrinogen-IX.</text>
</comment>
<comment type="catalytic activity">
    <reaction evidence="1">
        <text>coproporphyrinogen III + O2 + 2 H(+) = protoporphyrinogen IX + 2 CO2 + 2 H2O</text>
        <dbReference type="Rhea" id="RHEA:18257"/>
        <dbReference type="ChEBI" id="CHEBI:15377"/>
        <dbReference type="ChEBI" id="CHEBI:15378"/>
        <dbReference type="ChEBI" id="CHEBI:15379"/>
        <dbReference type="ChEBI" id="CHEBI:16526"/>
        <dbReference type="ChEBI" id="CHEBI:57307"/>
        <dbReference type="ChEBI" id="CHEBI:57309"/>
        <dbReference type="EC" id="1.3.3.3"/>
    </reaction>
</comment>
<comment type="cofactor">
    <cofactor evidence="1">
        <name>a divalent metal cation</name>
        <dbReference type="ChEBI" id="CHEBI:60240"/>
    </cofactor>
</comment>
<comment type="pathway">
    <text evidence="1">Porphyrin-containing compound metabolism; protoporphyrin-IX biosynthesis; protoporphyrinogen-IX from coproporphyrinogen-III (O2 route): step 1/1.</text>
</comment>
<comment type="subunit">
    <text evidence="1">Homodimer.</text>
</comment>
<comment type="subcellular location">
    <subcellularLocation>
        <location evidence="1">Cytoplasm</location>
    </subcellularLocation>
</comment>
<comment type="similarity">
    <text evidence="1">Belongs to the aerobic coproporphyrinogen-III oxidase family.</text>
</comment>